<reference key="1">
    <citation type="submission" date="2008-03" db="EMBL/GenBank/DDBJ databases">
        <title>Sequencing of the draft genome and assembly of Burkholderia graminis C4D1M.</title>
        <authorList>
            <consortium name="US DOE Joint Genome Institute (JGI-PGF)"/>
            <person name="Copeland A."/>
            <person name="Lucas S."/>
            <person name="Lapidus A."/>
            <person name="Glavina del Rio T."/>
            <person name="Dalin E."/>
            <person name="Tice H."/>
            <person name="Bruce D."/>
            <person name="Goodwin L."/>
            <person name="Pitluck S."/>
            <person name="Larimer F."/>
            <person name="Land M.L."/>
            <person name="Hauser L."/>
            <person name="Tiedje J."/>
            <person name="Richardson P."/>
        </authorList>
    </citation>
    <scope>NUCLEOTIDE SEQUENCE [LARGE SCALE GENOMIC DNA]</scope>
    <source>
        <strain>ATCC 700544 / DSM 17151 / LMG 18924 / NCIMB 13744 / C4D1M</strain>
    </source>
</reference>
<reference key="2">
    <citation type="journal article" date="2018" name="Nat. Chem. Biol.">
        <title>Functional assignment of multiple catabolic pathways for D-apiose.</title>
        <authorList>
            <person name="Carter M.S."/>
            <person name="Zhang X."/>
            <person name="Huang H."/>
            <person name="Bouvier J.T."/>
            <person name="Francisco B.S."/>
            <person name="Vetting M.W."/>
            <person name="Al-Obaidi N."/>
            <person name="Bonanno J.B."/>
            <person name="Ghosh A."/>
            <person name="Zallot R.G."/>
            <person name="Andersen H.M."/>
            <person name="Almo S.C."/>
            <person name="Gerlt J.A."/>
        </authorList>
    </citation>
    <scope>FUNCTION</scope>
    <scope>CATALYTIC ACTIVITY</scope>
    <scope>PATHWAY</scope>
</reference>
<accession>B1G889</accession>
<sequence length="470" mass="49606">MNGTEPAEPTNGTNATAWPAGLLLAYYGDDFTGSTDAMEAMQAAGVPTVLCLQKPTPELLARFPEVRCVGMAGSSRGRSSAWMDDELPDVLASLAALGAPILQYKVCSTFDSSPEVGSIGRAIDIGVRHMPGNWSPMVIGAPRLKRYQMFGNLFAAVDGVGYRLDRHPTMSRHPVTPMNEADLRLHLARQTARRIELIDMLELRGADVATRVRALCAPDMPVVLIDVLDEETLAEAGRLVWEQRGEGIFTASSSGLQYALAAHWRARGLLPPTPSLPAADPVQAIAAVSGSCSPVTAAQIGWARAHGFHTERLDLPRALDSRDGAAEIERVVTAATQALTRGISVIVHSAEGPDDPAVTGFDAIASAAGFARHDAARKVGRALAEVMRRLLDSVELTRVVVAGGDSSGEVASVLGIDALSVMAGLVPGAPLCRAWSAEPRRDGLQIVLKGGQIGDATFFGMVREGRLAGA</sequence>
<evidence type="ECO:0000250" key="1">
    <source>
        <dbReference type="UniProtKB" id="Q0KBC8"/>
    </source>
</evidence>
<evidence type="ECO:0000250" key="2">
    <source>
        <dbReference type="UniProtKB" id="Q6D0N7"/>
    </source>
</evidence>
<evidence type="ECO:0000269" key="3">
    <source>
    </source>
</evidence>
<evidence type="ECO:0000303" key="4">
    <source>
    </source>
</evidence>
<evidence type="ECO:0000305" key="5"/>
<evidence type="ECO:0000312" key="6">
    <source>
        <dbReference type="EMBL" id="EDT07588.1"/>
    </source>
</evidence>
<name>OIAK_PARG4</name>
<feature type="chain" id="PRO_0000446040" description="3-oxo-isoapionate kinase">
    <location>
        <begin position="1"/>
        <end position="470"/>
    </location>
</feature>
<feature type="binding site" evidence="2">
    <location>
        <position position="30"/>
    </location>
    <ligand>
        <name>substrate</name>
    </ligand>
</feature>
<feature type="binding site" evidence="2">
    <location>
        <position position="78"/>
    </location>
    <ligand>
        <name>substrate</name>
    </ligand>
</feature>
<feature type="binding site" evidence="1">
    <location>
        <position position="291"/>
    </location>
    <ligand>
        <name>ATP</name>
        <dbReference type="ChEBI" id="CHEBI:30616"/>
    </ligand>
</feature>
<feature type="binding site" evidence="1">
    <location>
        <begin position="403"/>
        <end position="406"/>
    </location>
    <ligand>
        <name>ATP</name>
        <dbReference type="ChEBI" id="CHEBI:30616"/>
    </ligand>
</feature>
<feature type="binding site" evidence="1">
    <location>
        <position position="451"/>
    </location>
    <ligand>
        <name>ATP</name>
        <dbReference type="ChEBI" id="CHEBI:30616"/>
    </ligand>
</feature>
<keyword id="KW-0067">ATP-binding</keyword>
<keyword id="KW-0119">Carbohydrate metabolism</keyword>
<keyword id="KW-0418">Kinase</keyword>
<keyword id="KW-0547">Nucleotide-binding</keyword>
<keyword id="KW-1185">Reference proteome</keyword>
<keyword id="KW-0808">Transferase</keyword>
<proteinExistence type="evidence at protein level"/>
<protein>
    <recommendedName>
        <fullName evidence="4">3-oxo-isoapionate kinase</fullName>
        <ecNumber evidence="3">2.7.1.231</ecNumber>
    </recommendedName>
</protein>
<comment type="function">
    <text evidence="3">Involved in catabolism of D-apiose. Catalyzes the phosphorylation of 3-oxo-isoapionate to 3-oxo-isoapionate 4-phosphate.</text>
</comment>
<comment type="catalytic activity">
    <reaction evidence="3">
        <text>3-oxoisoapionate + ATP = 3-oxoisoapionate 4-phosphate + ADP + H(+)</text>
        <dbReference type="Rhea" id="RHEA:57068"/>
        <dbReference type="ChEBI" id="CHEBI:15378"/>
        <dbReference type="ChEBI" id="CHEBI:30616"/>
        <dbReference type="ChEBI" id="CHEBI:141353"/>
        <dbReference type="ChEBI" id="CHEBI:141357"/>
        <dbReference type="ChEBI" id="CHEBI:456216"/>
        <dbReference type="EC" id="2.7.1.231"/>
    </reaction>
</comment>
<comment type="pathway">
    <text evidence="3">Carbohydrate metabolism.</text>
</comment>
<comment type="similarity">
    <text evidence="5">Belongs to the four-carbon acid sugar kinase family.</text>
</comment>
<gene>
    <name evidence="4" type="primary">oiaK</name>
    <name evidence="6" type="ORF">BgramDRAFT_5557</name>
</gene>
<dbReference type="EC" id="2.7.1.231" evidence="3"/>
<dbReference type="EMBL" id="ABLD01000025">
    <property type="protein sequence ID" value="EDT07588.1"/>
    <property type="molecule type" value="Genomic_DNA"/>
</dbReference>
<dbReference type="RefSeq" id="WP_006052126.1">
    <property type="nucleotide sequence ID" value="NZ_ABLD01000025.1"/>
</dbReference>
<dbReference type="SMR" id="B1G889"/>
<dbReference type="OrthoDB" id="191465at2"/>
<dbReference type="BioCyc" id="MetaCyc:MONOMER-20965"/>
<dbReference type="BRENDA" id="2.7.1.231">
    <property type="organism ID" value="12477"/>
</dbReference>
<dbReference type="Proteomes" id="UP000005045">
    <property type="component" value="Unassembled WGS sequence"/>
</dbReference>
<dbReference type="GO" id="GO:0005524">
    <property type="term" value="F:ATP binding"/>
    <property type="evidence" value="ECO:0007669"/>
    <property type="project" value="UniProtKB-KW"/>
</dbReference>
<dbReference type="GO" id="GO:0016301">
    <property type="term" value="F:kinase activity"/>
    <property type="evidence" value="ECO:0007669"/>
    <property type="project" value="UniProtKB-KW"/>
</dbReference>
<dbReference type="Gene3D" id="3.40.980.20">
    <property type="entry name" value="Four-carbon acid sugar kinase, nucleotide binding domain"/>
    <property type="match status" value="1"/>
</dbReference>
<dbReference type="Gene3D" id="3.40.50.10840">
    <property type="entry name" value="Putative sugar-binding, N-terminal domain"/>
    <property type="match status" value="1"/>
</dbReference>
<dbReference type="InterPro" id="IPR010737">
    <property type="entry name" value="4-carb_acid_sugar_kinase_N"/>
</dbReference>
<dbReference type="InterPro" id="IPR037051">
    <property type="entry name" value="4-carb_acid_sugar_kinase_N_sf"/>
</dbReference>
<dbReference type="InterPro" id="IPR031475">
    <property type="entry name" value="NBD_C"/>
</dbReference>
<dbReference type="InterPro" id="IPR042213">
    <property type="entry name" value="NBD_C_sf"/>
</dbReference>
<dbReference type="InterPro" id="IPR050015">
    <property type="entry name" value="OiaK"/>
</dbReference>
<dbReference type="NCBIfam" id="NF042436">
    <property type="entry name" value="OxoIsoapKin_OiaK"/>
    <property type="match status" value="1"/>
</dbReference>
<dbReference type="Pfam" id="PF17042">
    <property type="entry name" value="NBD_C"/>
    <property type="match status" value="1"/>
</dbReference>
<dbReference type="Pfam" id="PF07005">
    <property type="entry name" value="SBD_N"/>
    <property type="match status" value="1"/>
</dbReference>
<dbReference type="SUPFAM" id="SSF142764">
    <property type="entry name" value="YgbK-like"/>
    <property type="match status" value="1"/>
</dbReference>
<organism>
    <name type="scientific">Paraburkholderia graminis (strain ATCC 700544 / DSM 17151 / LMG 18924 / NCIMB 13744 / C4D1M)</name>
    <dbReference type="NCBI Taxonomy" id="396598"/>
    <lineage>
        <taxon>Bacteria</taxon>
        <taxon>Pseudomonadati</taxon>
        <taxon>Pseudomonadota</taxon>
        <taxon>Betaproteobacteria</taxon>
        <taxon>Burkholderiales</taxon>
        <taxon>Burkholderiaceae</taxon>
        <taxon>Paraburkholderia</taxon>
    </lineage>
</organism>